<feature type="chain" id="PRO_0000407889" description="Ribonuclease VapC32">
    <location>
        <begin position="1"/>
        <end position="124"/>
    </location>
</feature>
<feature type="domain" description="PINc" evidence="1">
    <location>
        <begin position="2"/>
        <end position="112"/>
    </location>
</feature>
<feature type="binding site" evidence="1">
    <location>
        <position position="5"/>
    </location>
    <ligand>
        <name>Mg(2+)</name>
        <dbReference type="ChEBI" id="CHEBI:18420"/>
    </ligand>
</feature>
<feature type="binding site" evidence="1">
    <location>
        <position position="86"/>
    </location>
    <ligand>
        <name>Mg(2+)</name>
        <dbReference type="ChEBI" id="CHEBI:18420"/>
    </ligand>
</feature>
<protein>
    <recommendedName>
        <fullName evidence="1">Ribonuclease VapC32</fullName>
        <shortName evidence="1">RNase VapC32</shortName>
        <ecNumber evidence="1">3.1.-.-</ecNumber>
    </recommendedName>
    <alternativeName>
        <fullName evidence="1">Toxin VapC32</fullName>
    </alternativeName>
</protein>
<comment type="function">
    <text evidence="1 2">Toxic component of a type II toxin-antitoxin (TA) system. An RNase (By similarity). Upon expression in M.smegmatis inhibits colony formation. Its toxic effect is neutralized by coexpression with cognate antitoxin VapB32.</text>
</comment>
<comment type="cofactor">
    <cofactor evidence="1">
        <name>Mg(2+)</name>
        <dbReference type="ChEBI" id="CHEBI:18420"/>
    </cofactor>
</comment>
<comment type="similarity">
    <text evidence="1">Belongs to the PINc/VapC protein family.</text>
</comment>
<reference key="1">
    <citation type="journal article" date="1998" name="Nature">
        <title>Deciphering the biology of Mycobacterium tuberculosis from the complete genome sequence.</title>
        <authorList>
            <person name="Cole S.T."/>
            <person name="Brosch R."/>
            <person name="Parkhill J."/>
            <person name="Garnier T."/>
            <person name="Churcher C.M."/>
            <person name="Harris D.E."/>
            <person name="Gordon S.V."/>
            <person name="Eiglmeier K."/>
            <person name="Gas S."/>
            <person name="Barry C.E. III"/>
            <person name="Tekaia F."/>
            <person name="Badcock K."/>
            <person name="Basham D."/>
            <person name="Brown D."/>
            <person name="Chillingworth T."/>
            <person name="Connor R."/>
            <person name="Davies R.M."/>
            <person name="Devlin K."/>
            <person name="Feltwell T."/>
            <person name="Gentles S."/>
            <person name="Hamlin N."/>
            <person name="Holroyd S."/>
            <person name="Hornsby T."/>
            <person name="Jagels K."/>
            <person name="Krogh A."/>
            <person name="McLean J."/>
            <person name="Moule S."/>
            <person name="Murphy L.D."/>
            <person name="Oliver S."/>
            <person name="Osborne J."/>
            <person name="Quail M.A."/>
            <person name="Rajandream M.A."/>
            <person name="Rogers J."/>
            <person name="Rutter S."/>
            <person name="Seeger K."/>
            <person name="Skelton S."/>
            <person name="Squares S."/>
            <person name="Squares R."/>
            <person name="Sulston J.E."/>
            <person name="Taylor K."/>
            <person name="Whitehead S."/>
            <person name="Barrell B.G."/>
        </authorList>
    </citation>
    <scope>NUCLEOTIDE SEQUENCE [LARGE SCALE GENOMIC DNA]</scope>
    <source>
        <strain>ATCC 25618 / H37Rv</strain>
    </source>
</reference>
<reference key="2">
    <citation type="journal article" date="2009" name="PLoS Genet.">
        <title>Comprehensive functional analysis of Mycobacterium tuberculosis toxin-antitoxin systems: implications for pathogenesis, stress responses, and evolution.</title>
        <authorList>
            <person name="Ramage H.R."/>
            <person name="Connolly L.E."/>
            <person name="Cox J.S."/>
        </authorList>
    </citation>
    <scope>EXPRESSION IN M.SMEGMATIS</scope>
    <scope>FUNCTION AS A TOXIN</scope>
    <source>
        <strain>ATCC 35801 / TMC 107 / Erdman</strain>
    </source>
</reference>
<reference key="3">
    <citation type="journal article" date="2011" name="Mol. Cell. Proteomics">
        <title>Proteogenomic analysis of Mycobacterium tuberculosis by high resolution mass spectrometry.</title>
        <authorList>
            <person name="Kelkar D.S."/>
            <person name="Kumar D."/>
            <person name="Kumar P."/>
            <person name="Balakrishnan L."/>
            <person name="Muthusamy B."/>
            <person name="Yadav A.K."/>
            <person name="Shrivastava P."/>
            <person name="Marimuthu A."/>
            <person name="Anand S."/>
            <person name="Sundaram H."/>
            <person name="Kingsbury R."/>
            <person name="Harsha H.C."/>
            <person name="Nair B."/>
            <person name="Prasad T.S."/>
            <person name="Chauhan D.S."/>
            <person name="Katoch K."/>
            <person name="Katoch V.M."/>
            <person name="Kumar P."/>
            <person name="Chaerkady R."/>
            <person name="Ramachandran S."/>
            <person name="Dash D."/>
            <person name="Pandey A."/>
        </authorList>
    </citation>
    <scope>IDENTIFICATION BY MASS SPECTROMETRY [LARGE SCALE ANALYSIS]</scope>
    <source>
        <strain>ATCC 25618 / H37Rv</strain>
    </source>
</reference>
<gene>
    <name evidence="1" type="primary">vapC32</name>
    <name type="ordered locus">Rv1114</name>
</gene>
<sequence>MILVDTSVWIEHLRAADARLVELLGDDEAGCHPLVIEELALGSIKQRDVVLDLLANLYQFPVVTHDEVLRLVGRRRLWGRGLGAVDANLLGSVALVGGARLWTRDKRLKAACAESGVALAEEVS</sequence>
<keyword id="KW-0378">Hydrolase</keyword>
<keyword id="KW-0460">Magnesium</keyword>
<keyword id="KW-0479">Metal-binding</keyword>
<keyword id="KW-0540">Nuclease</keyword>
<keyword id="KW-1185">Reference proteome</keyword>
<keyword id="KW-1277">Toxin-antitoxin system</keyword>
<evidence type="ECO:0000255" key="1">
    <source>
        <dbReference type="HAMAP-Rule" id="MF_00265"/>
    </source>
</evidence>
<evidence type="ECO:0000269" key="2">
    <source>
    </source>
</evidence>
<accession>P9WF73</accession>
<accession>L0T8Q2</accession>
<accession>O06566</accession>
<accession>Q7D8U2</accession>
<name>VPC32_MYCTU</name>
<organism>
    <name type="scientific">Mycobacterium tuberculosis (strain ATCC 25618 / H37Rv)</name>
    <dbReference type="NCBI Taxonomy" id="83332"/>
    <lineage>
        <taxon>Bacteria</taxon>
        <taxon>Bacillati</taxon>
        <taxon>Actinomycetota</taxon>
        <taxon>Actinomycetes</taxon>
        <taxon>Mycobacteriales</taxon>
        <taxon>Mycobacteriaceae</taxon>
        <taxon>Mycobacterium</taxon>
        <taxon>Mycobacterium tuberculosis complex</taxon>
    </lineage>
</organism>
<dbReference type="EC" id="3.1.-.-" evidence="1"/>
<dbReference type="EMBL" id="AL123456">
    <property type="protein sequence ID" value="CCP43867.1"/>
    <property type="molecule type" value="Genomic_DNA"/>
</dbReference>
<dbReference type="PIR" id="C70537">
    <property type="entry name" value="C70537"/>
</dbReference>
<dbReference type="RefSeq" id="NP_215630.1">
    <property type="nucleotide sequence ID" value="NC_000962.3"/>
</dbReference>
<dbReference type="RefSeq" id="WP_003405865.1">
    <property type="nucleotide sequence ID" value="NZ_NVQJ01000021.1"/>
</dbReference>
<dbReference type="SMR" id="P9WF73"/>
<dbReference type="STRING" id="83332.Rv1114"/>
<dbReference type="PaxDb" id="83332-Rv1114"/>
<dbReference type="DNASU" id="885490"/>
<dbReference type="GeneID" id="885490"/>
<dbReference type="KEGG" id="mtu:Rv1114"/>
<dbReference type="KEGG" id="mtv:RVBD_1114"/>
<dbReference type="TubercuList" id="Rv1114"/>
<dbReference type="eggNOG" id="COG1487">
    <property type="taxonomic scope" value="Bacteria"/>
</dbReference>
<dbReference type="InParanoid" id="P9WF73"/>
<dbReference type="OrthoDB" id="329172at2"/>
<dbReference type="PhylomeDB" id="P9WF73"/>
<dbReference type="Proteomes" id="UP000001584">
    <property type="component" value="Chromosome"/>
</dbReference>
<dbReference type="GO" id="GO:0000287">
    <property type="term" value="F:magnesium ion binding"/>
    <property type="evidence" value="ECO:0007669"/>
    <property type="project" value="UniProtKB-UniRule"/>
</dbReference>
<dbReference type="GO" id="GO:0004540">
    <property type="term" value="F:RNA nuclease activity"/>
    <property type="evidence" value="ECO:0007669"/>
    <property type="project" value="InterPro"/>
</dbReference>
<dbReference type="GO" id="GO:0045926">
    <property type="term" value="P:negative regulation of growth"/>
    <property type="evidence" value="ECO:0000315"/>
    <property type="project" value="MTBBASE"/>
</dbReference>
<dbReference type="Gene3D" id="3.40.50.1010">
    <property type="entry name" value="5'-nuclease"/>
    <property type="match status" value="1"/>
</dbReference>
<dbReference type="HAMAP" id="MF_00265">
    <property type="entry name" value="VapC_Nob1"/>
    <property type="match status" value="1"/>
</dbReference>
<dbReference type="InterPro" id="IPR029060">
    <property type="entry name" value="PIN-like_dom_sf"/>
</dbReference>
<dbReference type="InterPro" id="IPR002716">
    <property type="entry name" value="PIN_dom"/>
</dbReference>
<dbReference type="InterPro" id="IPR022907">
    <property type="entry name" value="VapC_family"/>
</dbReference>
<dbReference type="Pfam" id="PF01850">
    <property type="entry name" value="PIN"/>
    <property type="match status" value="1"/>
</dbReference>
<dbReference type="SUPFAM" id="SSF88723">
    <property type="entry name" value="PIN domain-like"/>
    <property type="match status" value="1"/>
</dbReference>
<proteinExistence type="evidence at protein level"/>